<reference key="1">
    <citation type="journal article" date="1992" name="J. Biol. Chem.">
        <title>RNA editing in trans-splicing intron sequences of nad2 mRNAs in Oenothera mitochondria.</title>
        <authorList>
            <person name="Binder S."/>
            <person name="Marchfelder A."/>
            <person name="Brennicke A."/>
            <person name="Wissinger B."/>
        </authorList>
    </citation>
    <scope>NUCLEOTIDE SEQUENCE [GENOMIC DNA]</scope>
    <scope>RNA EDITING</scope>
</reference>
<keyword id="KW-0249">Electron transport</keyword>
<keyword id="KW-0472">Membrane</keyword>
<keyword id="KW-0496">Mitochondrion</keyword>
<keyword id="KW-0999">Mitochondrion inner membrane</keyword>
<keyword id="KW-0520">NAD</keyword>
<keyword id="KW-0679">Respiratory chain</keyword>
<keyword id="KW-0691">RNA editing</keyword>
<keyword id="KW-1278">Translocase</keyword>
<keyword id="KW-0812">Transmembrane</keyword>
<keyword id="KW-1133">Transmembrane helix</keyword>
<keyword id="KW-0813">Transport</keyword>
<keyword id="KW-0830">Ubiquinone</keyword>
<name>NU2M_OENBE</name>
<sequence>MFNLFLAVFPEIFIINATFILLIHGVVFSTSKKDDYPPLVSNVGWLGLLSVLITLLLLAAGAPLLTIAHLFWNNFFRRDNFTYFCQILLLLSTAGTISMCFDFFEQERFDAFEFIVLILLSTCSMLFMISAYDLIAMYLAIELQSLCFYVLAASKRKSEFSTEAGLKYLILGAFSSGILLFGCSMIYGSTGATHFDQLAKILTGYEITGARSSGIFMGILFIAVGFLFKITAVPFHMWAPDIYEGSPTPVTAFLSIAPKISIFANILRVFIYGSYGATLQQIFFFCSIASMILGALAAMAQTKVKRLLAYSSIGHVGYICIGFSCGTIEGIQSLLIGLFIYALTTINAFAIVLALRQTRVKYIADLGALAKTNPILAITFSITMFSYAGIPPLAGFCSKFYLFFAALGCGAYFLASVGVVTSVIGCFYYIRLVKRMFFDTPRTWILYEPMDRNKSLLLAMTSSFITLFFLYPSPLFSVTHQMALSLYL</sequence>
<dbReference type="EC" id="7.1.1.2"/>
<dbReference type="EMBL" id="M81726">
    <property type="protein sequence ID" value="AAB18755.1"/>
    <property type="status" value="ALT_SEQ"/>
    <property type="molecule type" value="Genomic_DNA"/>
</dbReference>
<dbReference type="EMBL" id="M81725">
    <property type="protein sequence ID" value="AAB18755.1"/>
    <property type="status" value="JOINED"/>
    <property type="molecule type" value="Genomic_DNA"/>
</dbReference>
<dbReference type="SMR" id="P93401"/>
<dbReference type="GO" id="GO:0005743">
    <property type="term" value="C:mitochondrial inner membrane"/>
    <property type="evidence" value="ECO:0007669"/>
    <property type="project" value="UniProtKB-SubCell"/>
</dbReference>
<dbReference type="GO" id="GO:0009536">
    <property type="term" value="C:plastid"/>
    <property type="evidence" value="ECO:0007669"/>
    <property type="project" value="UniProtKB-ARBA"/>
</dbReference>
<dbReference type="GO" id="GO:0008137">
    <property type="term" value="F:NADH dehydrogenase (ubiquinone) activity"/>
    <property type="evidence" value="ECO:0007669"/>
    <property type="project" value="UniProtKB-EC"/>
</dbReference>
<dbReference type="GO" id="GO:0042773">
    <property type="term" value="P:ATP synthesis coupled electron transport"/>
    <property type="evidence" value="ECO:0007669"/>
    <property type="project" value="InterPro"/>
</dbReference>
<dbReference type="HAMAP" id="MF_00445">
    <property type="entry name" value="NDH1_NuoN_1"/>
    <property type="match status" value="1"/>
</dbReference>
<dbReference type="InterPro" id="IPR010096">
    <property type="entry name" value="NADH-Q_OxRdtase_suN/2"/>
</dbReference>
<dbReference type="InterPro" id="IPR001750">
    <property type="entry name" value="ND/Mrp_TM"/>
</dbReference>
<dbReference type="NCBIfam" id="TIGR01770">
    <property type="entry name" value="NDH_I_N"/>
    <property type="match status" value="1"/>
</dbReference>
<dbReference type="PANTHER" id="PTHR22773">
    <property type="entry name" value="NADH DEHYDROGENASE"/>
    <property type="match status" value="1"/>
</dbReference>
<dbReference type="Pfam" id="PF00361">
    <property type="entry name" value="Proton_antipo_M"/>
    <property type="match status" value="1"/>
</dbReference>
<protein>
    <recommendedName>
        <fullName>NADH-ubiquinone oxidoreductase chain 2</fullName>
        <ecNumber>7.1.1.2</ecNumber>
    </recommendedName>
    <alternativeName>
        <fullName>NADH dehydrogenase subunit 2</fullName>
    </alternativeName>
</protein>
<feature type="chain" id="PRO_0000117613" description="NADH-ubiquinone oxidoreductase chain 2">
    <location>
        <begin position="1"/>
        <end position="488"/>
    </location>
</feature>
<feature type="transmembrane region" description="Helical" evidence="2">
    <location>
        <begin position="4"/>
        <end position="24"/>
    </location>
</feature>
<feature type="transmembrane region" description="Helical" evidence="2">
    <location>
        <begin position="45"/>
        <end position="65"/>
    </location>
</feature>
<feature type="transmembrane region" description="Helical" evidence="2">
    <location>
        <begin position="84"/>
        <end position="104"/>
    </location>
</feature>
<feature type="transmembrane region" description="Helical" evidence="2">
    <location>
        <begin position="111"/>
        <end position="131"/>
    </location>
</feature>
<feature type="transmembrane region" description="Helical" evidence="2">
    <location>
        <begin position="134"/>
        <end position="154"/>
    </location>
</feature>
<feature type="transmembrane region" description="Helical" evidence="2">
    <location>
        <begin position="168"/>
        <end position="188"/>
    </location>
</feature>
<feature type="transmembrane region" description="Helical" evidence="2">
    <location>
        <begin position="215"/>
        <end position="235"/>
    </location>
</feature>
<feature type="transmembrane region" description="Helical" evidence="2">
    <location>
        <begin position="252"/>
        <end position="272"/>
    </location>
</feature>
<feature type="transmembrane region" description="Helical" evidence="2">
    <location>
        <begin position="282"/>
        <end position="302"/>
    </location>
</feature>
<feature type="transmembrane region" description="Helical" evidence="2">
    <location>
        <begin position="308"/>
        <end position="328"/>
    </location>
</feature>
<feature type="transmembrane region" description="Helical" evidence="2">
    <location>
        <begin position="334"/>
        <end position="354"/>
    </location>
</feature>
<feature type="transmembrane region" description="Helical" evidence="2">
    <location>
        <begin position="375"/>
        <end position="395"/>
    </location>
</feature>
<feature type="transmembrane region" description="Helical" evidence="2">
    <location>
        <begin position="400"/>
        <end position="420"/>
    </location>
</feature>
<feature type="transmembrane region" description="Helical" evidence="2">
    <location>
        <begin position="456"/>
        <end position="476"/>
    </location>
</feature>
<organism>
    <name type="scientific">Oenothera berteroana</name>
    <name type="common">Bertero's evening primrose</name>
    <dbReference type="NCBI Taxonomy" id="3950"/>
    <lineage>
        <taxon>Eukaryota</taxon>
        <taxon>Viridiplantae</taxon>
        <taxon>Streptophyta</taxon>
        <taxon>Embryophyta</taxon>
        <taxon>Tracheophyta</taxon>
        <taxon>Spermatophyta</taxon>
        <taxon>Magnoliopsida</taxon>
        <taxon>eudicotyledons</taxon>
        <taxon>Gunneridae</taxon>
        <taxon>Pentapetalae</taxon>
        <taxon>rosids</taxon>
        <taxon>malvids</taxon>
        <taxon>Myrtales</taxon>
        <taxon>Onagraceae</taxon>
        <taxon>Onagroideae</taxon>
        <taxon>Onagreae</taxon>
        <taxon>Oenothera</taxon>
    </lineage>
</organism>
<gene>
    <name type="primary">ND2</name>
    <name type="synonym">NAD2</name>
</gene>
<evidence type="ECO:0000250" key="1"/>
<evidence type="ECO:0000255" key="2"/>
<evidence type="ECO:0000269" key="3">
    <source>
    </source>
</evidence>
<evidence type="ECO:0000305" key="4"/>
<proteinExistence type="evidence at transcript level"/>
<accession>P93401</accession>
<geneLocation type="mitochondrion"/>
<comment type="function">
    <text evidence="1">Core subunit of the mitochondrial membrane respiratory chain NADH dehydrogenase (Complex I) that is believed to belong to the minimal assembly required for catalysis. Complex I functions in the transfer of electrons from NADH to the respiratory chain. The immediate electron acceptor for the enzyme is believed to be ubiquinone (By similarity).</text>
</comment>
<comment type="catalytic activity">
    <reaction>
        <text>a ubiquinone + NADH + 5 H(+)(in) = a ubiquinol + NAD(+) + 4 H(+)(out)</text>
        <dbReference type="Rhea" id="RHEA:29091"/>
        <dbReference type="Rhea" id="RHEA-COMP:9565"/>
        <dbReference type="Rhea" id="RHEA-COMP:9566"/>
        <dbReference type="ChEBI" id="CHEBI:15378"/>
        <dbReference type="ChEBI" id="CHEBI:16389"/>
        <dbReference type="ChEBI" id="CHEBI:17976"/>
        <dbReference type="ChEBI" id="CHEBI:57540"/>
        <dbReference type="ChEBI" id="CHEBI:57945"/>
        <dbReference type="EC" id="7.1.1.2"/>
    </reaction>
</comment>
<comment type="subcellular location">
    <subcellularLocation>
        <location>Mitochondrion inner membrane</location>
        <topology>Multi-pass membrane protein</topology>
    </subcellularLocation>
</comment>
<comment type="RNA editing">
    <location>
        <position position="9" evidence="3"/>
    </location>
    <location>
        <position position="19" evidence="3"/>
    </location>
    <location>
        <position position="75" evidence="3"/>
    </location>
    <location>
        <position position="103" evidence="3"/>
    </location>
    <location>
        <position position="104" evidence="3"/>
    </location>
    <location>
        <position position="119" evidence="3"/>
    </location>
    <location>
        <position position="121" evidence="3"/>
    </location>
    <location>
        <position position="123" evidence="3"/>
    </location>
    <location>
        <position position="132" evidence="3"/>
    </location>
    <location>
        <position position="134" evidence="3"/>
    </location>
    <location>
        <position position="143" evidence="3"/>
    </location>
    <location>
        <position position="166" evidence="3"/>
    </location>
    <location>
        <position position="175" evidence="3"/>
    </location>
    <location>
        <position position="221" evidence="3"/>
    </location>
    <location>
        <position position="263" evidence="3"/>
    </location>
    <location>
        <position position="267" evidence="3"/>
    </location>
    <location>
        <position position="270" evidence="3"/>
    </location>
    <location>
        <position position="307" evidence="3"/>
    </location>
    <location>
        <position position="310" evidence="3"/>
    </location>
    <location>
        <position position="320" evidence="3"/>
    </location>
    <location>
        <position position="321" evidence="3"/>
    </location>
    <location>
        <position position="353" evidence="3"/>
    </location>
    <location>
        <position position="375" evidence="3"/>
    </location>
    <location>
        <position position="376" evidence="3"/>
    </location>
    <location>
        <position position="416" evidence="3"/>
    </location>
    <location>
        <position position="433" evidence="3"/>
    </location>
    <location>
        <position position="467" evidence="3"/>
    </location>
    <location>
        <position position="468" evidence="3"/>
    </location>
    <location>
        <position position="486" evidence="3"/>
    </location>
</comment>
<comment type="miscellaneous">
    <text>Exons a and b and c, d and e are cis-spliced, while a trans-splicing reaction is required to link exons b and c.</text>
</comment>
<comment type="similarity">
    <text evidence="4">Belongs to the complex I subunit 2 family.</text>
</comment>